<feature type="chain" id="PRO_1000195476" description="6,7-dimethyl-8-ribityllumazine synthase">
    <location>
        <begin position="1"/>
        <end position="155"/>
    </location>
</feature>
<feature type="active site" description="Proton donor" evidence="1">
    <location>
        <position position="89"/>
    </location>
</feature>
<feature type="binding site" evidence="1">
    <location>
        <position position="23"/>
    </location>
    <ligand>
        <name>5-amino-6-(D-ribitylamino)uracil</name>
        <dbReference type="ChEBI" id="CHEBI:15934"/>
    </ligand>
</feature>
<feature type="binding site" evidence="1">
    <location>
        <begin position="57"/>
        <end position="59"/>
    </location>
    <ligand>
        <name>5-amino-6-(D-ribitylamino)uracil</name>
        <dbReference type="ChEBI" id="CHEBI:15934"/>
    </ligand>
</feature>
<feature type="binding site" evidence="1">
    <location>
        <begin position="81"/>
        <end position="83"/>
    </location>
    <ligand>
        <name>5-amino-6-(D-ribitylamino)uracil</name>
        <dbReference type="ChEBI" id="CHEBI:15934"/>
    </ligand>
</feature>
<feature type="binding site" evidence="1">
    <location>
        <begin position="86"/>
        <end position="87"/>
    </location>
    <ligand>
        <name>(2S)-2-hydroxy-3-oxobutyl phosphate</name>
        <dbReference type="ChEBI" id="CHEBI:58830"/>
    </ligand>
</feature>
<feature type="binding site" evidence="1">
    <location>
        <position position="114"/>
    </location>
    <ligand>
        <name>5-amino-6-(D-ribitylamino)uracil</name>
        <dbReference type="ChEBI" id="CHEBI:15934"/>
    </ligand>
</feature>
<feature type="binding site" evidence="1">
    <location>
        <position position="128"/>
    </location>
    <ligand>
        <name>(2S)-2-hydroxy-3-oxobutyl phosphate</name>
        <dbReference type="ChEBI" id="CHEBI:58830"/>
    </ligand>
</feature>
<organism>
    <name type="scientific">Dehalococcoides mccartyi (strain CBDB1)</name>
    <dbReference type="NCBI Taxonomy" id="255470"/>
    <lineage>
        <taxon>Bacteria</taxon>
        <taxon>Bacillati</taxon>
        <taxon>Chloroflexota</taxon>
        <taxon>Dehalococcoidia</taxon>
        <taxon>Dehalococcoidales</taxon>
        <taxon>Dehalococcoidaceae</taxon>
        <taxon>Dehalococcoides</taxon>
    </lineage>
</organism>
<dbReference type="EC" id="2.5.1.78" evidence="1"/>
<dbReference type="EMBL" id="AJ965256">
    <property type="protein sequence ID" value="CAI83200.1"/>
    <property type="molecule type" value="Genomic_DNA"/>
</dbReference>
<dbReference type="SMR" id="Q3ZY85"/>
<dbReference type="KEGG" id="deh:cbdbA1102"/>
<dbReference type="HOGENOM" id="CLU_089358_1_1_0"/>
<dbReference type="UniPathway" id="UPA00275">
    <property type="reaction ID" value="UER00404"/>
</dbReference>
<dbReference type="Proteomes" id="UP000000433">
    <property type="component" value="Chromosome"/>
</dbReference>
<dbReference type="GO" id="GO:0005829">
    <property type="term" value="C:cytosol"/>
    <property type="evidence" value="ECO:0007669"/>
    <property type="project" value="TreeGrafter"/>
</dbReference>
<dbReference type="GO" id="GO:0009349">
    <property type="term" value="C:riboflavin synthase complex"/>
    <property type="evidence" value="ECO:0007669"/>
    <property type="project" value="InterPro"/>
</dbReference>
<dbReference type="GO" id="GO:0000906">
    <property type="term" value="F:6,7-dimethyl-8-ribityllumazine synthase activity"/>
    <property type="evidence" value="ECO:0007669"/>
    <property type="project" value="UniProtKB-UniRule"/>
</dbReference>
<dbReference type="GO" id="GO:0009231">
    <property type="term" value="P:riboflavin biosynthetic process"/>
    <property type="evidence" value="ECO:0007669"/>
    <property type="project" value="UniProtKB-UniRule"/>
</dbReference>
<dbReference type="CDD" id="cd09209">
    <property type="entry name" value="Lumazine_synthase-I"/>
    <property type="match status" value="1"/>
</dbReference>
<dbReference type="FunFam" id="3.40.50.960:FF:000001">
    <property type="entry name" value="6,7-dimethyl-8-ribityllumazine synthase"/>
    <property type="match status" value="1"/>
</dbReference>
<dbReference type="Gene3D" id="3.40.50.960">
    <property type="entry name" value="Lumazine/riboflavin synthase"/>
    <property type="match status" value="1"/>
</dbReference>
<dbReference type="HAMAP" id="MF_00178">
    <property type="entry name" value="Lumazine_synth"/>
    <property type="match status" value="1"/>
</dbReference>
<dbReference type="InterPro" id="IPR034964">
    <property type="entry name" value="LS"/>
</dbReference>
<dbReference type="InterPro" id="IPR002180">
    <property type="entry name" value="LS/RS"/>
</dbReference>
<dbReference type="InterPro" id="IPR036467">
    <property type="entry name" value="LS/RS_sf"/>
</dbReference>
<dbReference type="NCBIfam" id="TIGR00114">
    <property type="entry name" value="lumazine-synth"/>
    <property type="match status" value="1"/>
</dbReference>
<dbReference type="NCBIfam" id="NF000812">
    <property type="entry name" value="PRK00061.1-4"/>
    <property type="match status" value="1"/>
</dbReference>
<dbReference type="PANTHER" id="PTHR21058:SF0">
    <property type="entry name" value="6,7-DIMETHYL-8-RIBITYLLUMAZINE SYNTHASE"/>
    <property type="match status" value="1"/>
</dbReference>
<dbReference type="PANTHER" id="PTHR21058">
    <property type="entry name" value="6,7-DIMETHYL-8-RIBITYLLUMAZINE SYNTHASE DMRL SYNTHASE LUMAZINE SYNTHASE"/>
    <property type="match status" value="1"/>
</dbReference>
<dbReference type="Pfam" id="PF00885">
    <property type="entry name" value="DMRL_synthase"/>
    <property type="match status" value="1"/>
</dbReference>
<dbReference type="SUPFAM" id="SSF52121">
    <property type="entry name" value="Lumazine synthase"/>
    <property type="match status" value="1"/>
</dbReference>
<protein>
    <recommendedName>
        <fullName evidence="1">6,7-dimethyl-8-ribityllumazine synthase</fullName>
        <shortName evidence="1">DMRL synthase</shortName>
        <shortName evidence="1">LS</shortName>
        <shortName evidence="1">Lumazine synthase</shortName>
        <ecNumber evidence="1">2.5.1.78</ecNumber>
    </recommendedName>
</protein>
<proteinExistence type="inferred from homology"/>
<accession>Q3ZY85</accession>
<comment type="function">
    <text evidence="1">Catalyzes the formation of 6,7-dimethyl-8-ribityllumazine by condensation of 5-amino-6-(D-ribitylamino)uracil with 3,4-dihydroxy-2-butanone 4-phosphate. This is the penultimate step in the biosynthesis of riboflavin.</text>
</comment>
<comment type="catalytic activity">
    <reaction evidence="1">
        <text>(2S)-2-hydroxy-3-oxobutyl phosphate + 5-amino-6-(D-ribitylamino)uracil = 6,7-dimethyl-8-(1-D-ribityl)lumazine + phosphate + 2 H2O + H(+)</text>
        <dbReference type="Rhea" id="RHEA:26152"/>
        <dbReference type="ChEBI" id="CHEBI:15377"/>
        <dbReference type="ChEBI" id="CHEBI:15378"/>
        <dbReference type="ChEBI" id="CHEBI:15934"/>
        <dbReference type="ChEBI" id="CHEBI:43474"/>
        <dbReference type="ChEBI" id="CHEBI:58201"/>
        <dbReference type="ChEBI" id="CHEBI:58830"/>
        <dbReference type="EC" id="2.5.1.78"/>
    </reaction>
</comment>
<comment type="pathway">
    <text evidence="1">Cofactor biosynthesis; riboflavin biosynthesis; riboflavin from 2-hydroxy-3-oxobutyl phosphate and 5-amino-6-(D-ribitylamino)uracil: step 1/2.</text>
</comment>
<comment type="similarity">
    <text evidence="1">Belongs to the DMRL synthase family.</text>
</comment>
<gene>
    <name evidence="1" type="primary">ribH</name>
    <name type="ordered locus">cbdbA1102</name>
</gene>
<name>RISB_DEHMC</name>
<sequence length="155" mass="16295">MGKEFSGVLNGQGLKIALVVSRFNEFITSKLLSGAKDSLERHGVSADNTDVAWVPGAFEIPLVAQKLAKSGRYDAVVCLGAVIRGSTPHFEYVSSEVSKGIARVGLDAGLPVIFGVITADSIEQAIERAGTKMGNKGFDAATQAIEVANLMKNLT</sequence>
<reference key="1">
    <citation type="journal article" date="2005" name="Nat. Biotechnol.">
        <title>Genome sequence of the chlorinated compound-respiring bacterium Dehalococcoides species strain CBDB1.</title>
        <authorList>
            <person name="Kube M."/>
            <person name="Beck A."/>
            <person name="Zinder S.H."/>
            <person name="Kuhl H."/>
            <person name="Reinhardt R."/>
            <person name="Adrian L."/>
        </authorList>
    </citation>
    <scope>NUCLEOTIDE SEQUENCE [LARGE SCALE GENOMIC DNA]</scope>
    <source>
        <strain>CBDB1</strain>
    </source>
</reference>
<keyword id="KW-0686">Riboflavin biosynthesis</keyword>
<keyword id="KW-0808">Transferase</keyword>
<evidence type="ECO:0000255" key="1">
    <source>
        <dbReference type="HAMAP-Rule" id="MF_00178"/>
    </source>
</evidence>